<protein>
    <recommendedName>
        <fullName evidence="5">Type 4 adapter protein LvgA</fullName>
    </recommendedName>
    <alternativeName>
        <fullName evidence="4">Virulence factor LvgA</fullName>
    </alternativeName>
</protein>
<sequence>MADGDIEIKAGFVDTDLDDRKLTMIDDLNNPLAIVERVYLIWWHWADFHLHVISPHIDTITPAIVIEPELISGSNDHEFVYSIHDSGSKLSTSKSQDMFSAGMSMCKLFYTIEKMVHILVDRLKSGGVSMEEEVQIAFAGHEIAQRKAFESIINLPYNVVVTNFDPGIWGEKYLQNVKRLADKGYGYPPESPRENYKHPVSSATTARK</sequence>
<accession>Q9RNG8</accession>
<accession>E1XUX1</accession>
<feature type="chain" id="PRO_0000455598" description="Type 4 adapter protein LvgA">
    <location>
        <begin position="1"/>
        <end position="208"/>
    </location>
</feature>
<feature type="region of interest" description="Disordered" evidence="2">
    <location>
        <begin position="184"/>
        <end position="208"/>
    </location>
</feature>
<comment type="function">
    <text evidence="1 3">Component of the Dot/Icm type IVB secretion system (T4BSS), which is used to inject bacterial effector proteins into eukaryotic host cells (By similarity). Part of a subcomplex which recruits effector proteins and delivers them to the core transmembrane subcomplex (By similarity). Is a critical subunit for binding a subset of effector proteins (By similarity). Recognizes more than one type of binding motif (By similarity). May be a critical factor that confers host specificity (By similarity). Necessary for full virulence of the bacterium in guinea pigs and presumably humans (PubMed:12704109).</text>
</comment>
<comment type="subunit">
    <text evidence="1">The T4BSS is a complex nanomachine composed of several subcomplexes. This subunit is part of the Type IV Coupling Complex (T4CC), a subcomplex composed of the DotLMNYZ core and the IcmSW-LvgA adapter subunits, linked by the C-terminal tail of DotL.</text>
</comment>
<comment type="subcellular location">
    <subcellularLocation>
        <location evidence="1">Cytoplasm</location>
    </subcellularLocation>
    <text evidence="3">At least some of the protein may be surface expressed.</text>
</comment>
<comment type="disruption phenotype">
    <text evidence="3">Shows attenuated virulence in guinea pigs. Mutant invades alveolar macrophages normally, but shows slower growth than wild-type strain. The mutant is twofold more susceptible to killing by human beta-defensin 2 but not to killing by other cationic peptides, serum complement, or polymorphonuclear neutrophils.</text>
</comment>
<dbReference type="EMBL" id="AF181867">
    <property type="protein sequence ID" value="AAF05324.2"/>
    <property type="molecule type" value="Genomic_DNA"/>
</dbReference>
<dbReference type="EMBL" id="QFHM01000010">
    <property type="protein sequence ID" value="TIE45252.1"/>
    <property type="molecule type" value="Genomic_DNA"/>
</dbReference>
<dbReference type="RefSeq" id="WP_027264756.1">
    <property type="nucleotide sequence ID" value="NZ_UGOS01000001.1"/>
</dbReference>
<dbReference type="SMR" id="Q9RNG8"/>
<dbReference type="GO" id="GO:0005737">
    <property type="term" value="C:cytoplasm"/>
    <property type="evidence" value="ECO:0007669"/>
    <property type="project" value="UniProtKB-SubCell"/>
</dbReference>
<dbReference type="GO" id="GO:0015031">
    <property type="term" value="P:protein transport"/>
    <property type="evidence" value="ECO:0007669"/>
    <property type="project" value="UniProtKB-KW"/>
</dbReference>
<reference key="1">
    <citation type="journal article" date="2003" name="Infect. Immun.">
        <title>lvgA, a novel Legionella pneumophila virulence factor.</title>
        <authorList>
            <person name="Edelstein P.H."/>
            <person name="Hu B."/>
            <person name="Higa F."/>
            <person name="Edelstein M.A."/>
        </authorList>
    </citation>
    <scope>NUCLEOTIDE SEQUENCE [GENOMIC DNA]</scope>
    <scope>FUNCTION IN VIRULENCE</scope>
    <scope>SUBCELLULAR LOCATION</scope>
    <scope>DISRUPTION PHENOTYPE</scope>
    <source>
        <strain>130b / Wadsworth / Serogroup 1</strain>
    </source>
</reference>
<reference key="2">
    <citation type="submission" date="2018-04" db="EMBL/GenBank/DDBJ databases">
        <title>Whole genome sequence comparison of clinical and drinking water Legionella pneumophila isolates.</title>
        <authorList>
            <person name="Garner E."/>
        </authorList>
    </citation>
    <scope>NUCLEOTIDE SEQUENCE [LARGE SCALE GENOMIC DNA]</scope>
    <source>
        <strain>POC1</strain>
    </source>
</reference>
<gene>
    <name evidence="4" type="primary">lvgA</name>
    <name evidence="6" type="ORF">DIZ50_12655</name>
</gene>
<keyword id="KW-0963">Cytoplasm</keyword>
<keyword id="KW-0653">Protein transport</keyword>
<keyword id="KW-0813">Transport</keyword>
<keyword id="KW-0843">Virulence</keyword>
<organism>
    <name type="scientific">Legionella pneumophila</name>
    <dbReference type="NCBI Taxonomy" id="446"/>
    <lineage>
        <taxon>Bacteria</taxon>
        <taxon>Pseudomonadati</taxon>
        <taxon>Pseudomonadota</taxon>
        <taxon>Gammaproteobacteria</taxon>
        <taxon>Legionellales</taxon>
        <taxon>Legionellaceae</taxon>
        <taxon>Legionella</taxon>
    </lineage>
</organism>
<proteinExistence type="evidence at protein level"/>
<name>LVGA_LEGPN</name>
<evidence type="ECO:0000250" key="1">
    <source>
        <dbReference type="UniProtKB" id="Q5ZY48"/>
    </source>
</evidence>
<evidence type="ECO:0000256" key="2">
    <source>
        <dbReference type="SAM" id="MobiDB-lite"/>
    </source>
</evidence>
<evidence type="ECO:0000269" key="3">
    <source>
    </source>
</evidence>
<evidence type="ECO:0000303" key="4">
    <source>
    </source>
</evidence>
<evidence type="ECO:0000305" key="5"/>
<evidence type="ECO:0000312" key="6">
    <source>
        <dbReference type="EMBL" id="TIE45252.1"/>
    </source>
</evidence>